<sequence length="301" mass="33132">MSTKREDHLRKGADVTPTEALVAGSIAGAISRAFTAPLDTIKIRLQLQPKGFKHRKSVVTIVKNLLENEGIIALWKGNVPAEILYILYGGVQFGSYSIISKSVSKLENNYRINLSSANHSLIVGIGSGIVSTLVTYPFDLLRTRLIANKNRGLLSMTGTIKDIIKLEGIRGIYAGIRPAMLSVSSTTGLMFWSYELARELSNNYQRVPFIEAICGFIAGATSKGITFPLDTLRKRCQMCSVVHGRPYTASHIFVTILKNEGVFGLYKGFGISVLKTAPTSAISLFMYEYSLSFIRKIRVIE</sequence>
<proteinExistence type="inferred from homology"/>
<reference key="1">
    <citation type="journal article" date="2004" name="Proc. Natl. Acad. Sci. U.S.A.">
        <title>The diploid genome sequence of Candida albicans.</title>
        <authorList>
            <person name="Jones T."/>
            <person name="Federspiel N.A."/>
            <person name="Chibana H."/>
            <person name="Dungan J."/>
            <person name="Kalman S."/>
            <person name="Magee B.B."/>
            <person name="Newport G."/>
            <person name="Thorstenson Y.R."/>
            <person name="Agabian N."/>
            <person name="Magee P.T."/>
            <person name="Davis R.W."/>
            <person name="Scherer S."/>
        </authorList>
    </citation>
    <scope>NUCLEOTIDE SEQUENCE [LARGE SCALE GENOMIC DNA]</scope>
    <source>
        <strain>SC5314 / ATCC MYA-2876</strain>
    </source>
</reference>
<reference key="2">
    <citation type="journal article" date="2007" name="Genome Biol.">
        <title>Assembly of the Candida albicans genome into sixteen supercontigs aligned on the eight chromosomes.</title>
        <authorList>
            <person name="van het Hoog M."/>
            <person name="Rast T.J."/>
            <person name="Martchenko M."/>
            <person name="Grindle S."/>
            <person name="Dignard D."/>
            <person name="Hogues H."/>
            <person name="Cuomo C."/>
            <person name="Berriman M."/>
            <person name="Scherer S."/>
            <person name="Magee B.B."/>
            <person name="Whiteway M."/>
            <person name="Chibana H."/>
            <person name="Nantel A."/>
            <person name="Magee P.T."/>
        </authorList>
    </citation>
    <scope>GENOME REANNOTATION</scope>
    <source>
        <strain>SC5314 / ATCC MYA-2876</strain>
    </source>
</reference>
<reference key="3">
    <citation type="journal article" date="2013" name="Genome Biol.">
        <title>Assembly of a phased diploid Candida albicans genome facilitates allele-specific measurements and provides a simple model for repeat and indel structure.</title>
        <authorList>
            <person name="Muzzey D."/>
            <person name="Schwartz K."/>
            <person name="Weissman J.S."/>
            <person name="Sherlock G."/>
        </authorList>
    </citation>
    <scope>NUCLEOTIDE SEQUENCE [LARGE SCALE GENOMIC DNA]</scope>
    <scope>GENOME REANNOTATION</scope>
    <source>
        <strain>SC5314 / ATCC MYA-2876</strain>
    </source>
</reference>
<feature type="chain" id="PRO_0000320460" description="Mitochondrial thiamine pyrophosphate carrier 1">
    <location>
        <begin position="1"/>
        <end position="301"/>
    </location>
</feature>
<feature type="transmembrane region" description="Helical; Name=1" evidence="2">
    <location>
        <begin position="20"/>
        <end position="38"/>
    </location>
</feature>
<feature type="transmembrane region" description="Helical; Name=2" evidence="2">
    <location>
        <begin position="79"/>
        <end position="99"/>
    </location>
</feature>
<feature type="transmembrane region" description="Helical; Name=3" evidence="2">
    <location>
        <begin position="121"/>
        <end position="141"/>
    </location>
</feature>
<feature type="transmembrane region" description="Helical; Name=4" evidence="2">
    <location>
        <begin position="172"/>
        <end position="192"/>
    </location>
</feature>
<feature type="transmembrane region" description="Helical; Name=5" evidence="2">
    <location>
        <begin position="207"/>
        <end position="227"/>
    </location>
</feature>
<feature type="transmembrane region" description="Helical; Name=6" evidence="2">
    <location>
        <begin position="252"/>
        <end position="272"/>
    </location>
</feature>
<feature type="repeat" description="Solcar 1">
    <location>
        <begin position="15"/>
        <end position="102"/>
    </location>
</feature>
<feature type="repeat" description="Solcar 2">
    <location>
        <begin position="115"/>
        <end position="200"/>
    </location>
</feature>
<feature type="repeat" description="Solcar 3">
    <location>
        <begin position="206"/>
        <end position="293"/>
    </location>
</feature>
<dbReference type="EMBL" id="CP017624">
    <property type="protein sequence ID" value="AOW27655.1"/>
    <property type="molecule type" value="Genomic_DNA"/>
</dbReference>
<dbReference type="RefSeq" id="XP_711835.1">
    <property type="nucleotide sequence ID" value="XM_706743.1"/>
</dbReference>
<dbReference type="SMR" id="Q59Q36"/>
<dbReference type="FunCoup" id="Q59Q36">
    <property type="interactions" value="39"/>
</dbReference>
<dbReference type="STRING" id="237561.Q59Q36"/>
<dbReference type="EnsemblFungi" id="C2_06520C_A-T">
    <property type="protein sequence ID" value="C2_06520C_A-T-p1"/>
    <property type="gene ID" value="C2_06520C_A"/>
</dbReference>
<dbReference type="GeneID" id="3646571"/>
<dbReference type="KEGG" id="cal:CAALFM_C206520CA"/>
<dbReference type="CGD" id="CAL0000175641">
    <property type="gene designation" value="orf19.7699"/>
</dbReference>
<dbReference type="VEuPathDB" id="FungiDB:C2_06520C_A"/>
<dbReference type="eggNOG" id="KOG0752">
    <property type="taxonomic scope" value="Eukaryota"/>
</dbReference>
<dbReference type="HOGENOM" id="CLU_015166_10_3_1"/>
<dbReference type="InParanoid" id="Q59Q36"/>
<dbReference type="OMA" id="MYVCYGA"/>
<dbReference type="OrthoDB" id="18574at2759"/>
<dbReference type="BRENDA" id="2.7.6.2">
    <property type="organism ID" value="3474"/>
</dbReference>
<dbReference type="PRO" id="PR:Q59Q36"/>
<dbReference type="Proteomes" id="UP000000559">
    <property type="component" value="Chromosome 2"/>
</dbReference>
<dbReference type="GO" id="GO:0005743">
    <property type="term" value="C:mitochondrial inner membrane"/>
    <property type="evidence" value="ECO:0000318"/>
    <property type="project" value="GO_Central"/>
</dbReference>
<dbReference type="GO" id="GO:0090422">
    <property type="term" value="F:thiamine pyrophosphate transmembrane transporter activity"/>
    <property type="evidence" value="ECO:0007669"/>
    <property type="project" value="EnsemblFungi"/>
</dbReference>
<dbReference type="GO" id="GO:0015234">
    <property type="term" value="F:thiamine transmembrane transporter activity"/>
    <property type="evidence" value="ECO:0000318"/>
    <property type="project" value="GO_Central"/>
</dbReference>
<dbReference type="GO" id="GO:1990545">
    <property type="term" value="P:mitochondrial thiamine pyrophosphate transmembrane transport"/>
    <property type="evidence" value="ECO:0007669"/>
    <property type="project" value="EnsemblFungi"/>
</dbReference>
<dbReference type="GO" id="GO:0030974">
    <property type="term" value="P:thiamine pyrophosphate transmembrane transport"/>
    <property type="evidence" value="ECO:0000318"/>
    <property type="project" value="GO_Central"/>
</dbReference>
<dbReference type="FunFam" id="1.50.40.10:FF:000272">
    <property type="entry name" value="Mitochondrial thiamine pyrophosphate transporter, mitochondrial carrier family member, putative"/>
    <property type="match status" value="1"/>
</dbReference>
<dbReference type="Gene3D" id="1.50.40.10">
    <property type="entry name" value="Mitochondrial carrier domain"/>
    <property type="match status" value="1"/>
</dbReference>
<dbReference type="InterPro" id="IPR002067">
    <property type="entry name" value="Mit_carrier"/>
</dbReference>
<dbReference type="InterPro" id="IPR018108">
    <property type="entry name" value="Mitochondrial_sb/sol_carrier"/>
</dbReference>
<dbReference type="InterPro" id="IPR023395">
    <property type="entry name" value="Mt_carrier_dom_sf"/>
</dbReference>
<dbReference type="PANTHER" id="PTHR24089">
    <property type="entry name" value="SOLUTE CARRIER FAMILY 25"/>
    <property type="match status" value="1"/>
</dbReference>
<dbReference type="Pfam" id="PF00153">
    <property type="entry name" value="Mito_carr"/>
    <property type="match status" value="3"/>
</dbReference>
<dbReference type="PRINTS" id="PR00926">
    <property type="entry name" value="MITOCARRIER"/>
</dbReference>
<dbReference type="SUPFAM" id="SSF103506">
    <property type="entry name" value="Mitochondrial carrier"/>
    <property type="match status" value="1"/>
</dbReference>
<dbReference type="PROSITE" id="PS50920">
    <property type="entry name" value="SOLCAR"/>
    <property type="match status" value="3"/>
</dbReference>
<protein>
    <recommendedName>
        <fullName>Mitochondrial thiamine pyrophosphate carrier 1</fullName>
    </recommendedName>
</protein>
<comment type="function">
    <text evidence="1">Mitochondrial transporter that mediates uptake of thiamine pyrophosphate (ThPP) into mitochondria.</text>
</comment>
<comment type="subcellular location">
    <subcellularLocation>
        <location evidence="1">Mitochondrion inner membrane</location>
        <topology evidence="1">Multi-pass membrane protein</topology>
    </subcellularLocation>
</comment>
<comment type="similarity">
    <text evidence="3">Belongs to the mitochondrial carrier (TC 2.A.29) family.</text>
</comment>
<accession>Q59Q36</accession>
<accession>A0A1D8PHQ2</accession>
<organism>
    <name type="scientific">Candida albicans (strain SC5314 / ATCC MYA-2876)</name>
    <name type="common">Yeast</name>
    <dbReference type="NCBI Taxonomy" id="237561"/>
    <lineage>
        <taxon>Eukaryota</taxon>
        <taxon>Fungi</taxon>
        <taxon>Dikarya</taxon>
        <taxon>Ascomycota</taxon>
        <taxon>Saccharomycotina</taxon>
        <taxon>Pichiomycetes</taxon>
        <taxon>Debaryomycetaceae</taxon>
        <taxon>Candida/Lodderomyces clade</taxon>
        <taxon>Candida</taxon>
    </lineage>
</organism>
<evidence type="ECO:0000250" key="1"/>
<evidence type="ECO:0000255" key="2"/>
<evidence type="ECO:0000305" key="3"/>
<keyword id="KW-0472">Membrane</keyword>
<keyword id="KW-0496">Mitochondrion</keyword>
<keyword id="KW-0999">Mitochondrion inner membrane</keyword>
<keyword id="KW-1185">Reference proteome</keyword>
<keyword id="KW-0677">Repeat</keyword>
<keyword id="KW-0812">Transmembrane</keyword>
<keyword id="KW-1133">Transmembrane helix</keyword>
<keyword id="KW-0813">Transport</keyword>
<gene>
    <name type="primary">TPC1</name>
    <name type="ordered locus">CAALFM_C206520CA</name>
    <name type="ORF">CaO19.28</name>
    <name type="ORF">CaO19.7699</name>
</gene>
<name>TPC1_CANAL</name>